<name>RDRP_I000X</name>
<gene>
    <name evidence="1" type="primary">PB1</name>
</gene>
<keyword id="KW-1262">Eukaryotic host gene expression shutoff by virus</keyword>
<keyword id="KW-1191">Eukaryotic host transcription shutoff by virus</keyword>
<keyword id="KW-1035">Host cytoplasm</keyword>
<keyword id="KW-1190">Host gene expression shutoff by virus</keyword>
<keyword id="KW-1048">Host nucleus</keyword>
<keyword id="KW-0945">Host-virus interaction</keyword>
<keyword id="KW-1104">Inhibition of host RNA polymerase II by virus</keyword>
<keyword id="KW-0547">Nucleotide-binding</keyword>
<keyword id="KW-0548">Nucleotidyltransferase</keyword>
<keyword id="KW-0597">Phosphoprotein</keyword>
<keyword id="KW-0696">RNA-directed RNA polymerase</keyword>
<keyword id="KW-0808">Transferase</keyword>
<keyword id="KW-0693">Viral RNA replication</keyword>
<keyword id="KW-1195">Viral transcription</keyword>
<dbReference type="EC" id="2.7.7.48" evidence="1"/>
<dbReference type="EMBL" id="AB036781">
    <property type="protein sequence ID" value="BAA99402.1"/>
    <property type="molecule type" value="Genomic_RNA"/>
</dbReference>
<dbReference type="SMR" id="Q9IQ46"/>
<dbReference type="GO" id="GO:0030430">
    <property type="term" value="C:host cell cytoplasm"/>
    <property type="evidence" value="ECO:0007669"/>
    <property type="project" value="UniProtKB-SubCell"/>
</dbReference>
<dbReference type="GO" id="GO:0042025">
    <property type="term" value="C:host cell nucleus"/>
    <property type="evidence" value="ECO:0007669"/>
    <property type="project" value="UniProtKB-SubCell"/>
</dbReference>
<dbReference type="GO" id="GO:0000166">
    <property type="term" value="F:nucleotide binding"/>
    <property type="evidence" value="ECO:0007669"/>
    <property type="project" value="UniProtKB-UniRule"/>
</dbReference>
<dbReference type="GO" id="GO:0003723">
    <property type="term" value="F:RNA binding"/>
    <property type="evidence" value="ECO:0007669"/>
    <property type="project" value="InterPro"/>
</dbReference>
<dbReference type="GO" id="GO:0003968">
    <property type="term" value="F:RNA-directed RNA polymerase activity"/>
    <property type="evidence" value="ECO:0007669"/>
    <property type="project" value="UniProtKB-UniRule"/>
</dbReference>
<dbReference type="GO" id="GO:0006351">
    <property type="term" value="P:DNA-templated transcription"/>
    <property type="evidence" value="ECO:0007669"/>
    <property type="project" value="UniProtKB-UniRule"/>
</dbReference>
<dbReference type="GO" id="GO:0039657">
    <property type="term" value="P:symbiont-mediated suppression of host gene expression"/>
    <property type="evidence" value="ECO:0007669"/>
    <property type="project" value="UniProtKB-KW"/>
</dbReference>
<dbReference type="GO" id="GO:0039523">
    <property type="term" value="P:symbiont-mediated suppression of host mRNA transcription via inhibition of RNA polymerase II activity"/>
    <property type="evidence" value="ECO:0007669"/>
    <property type="project" value="UniProtKB-UniRule"/>
</dbReference>
<dbReference type="GO" id="GO:0039694">
    <property type="term" value="P:viral RNA genome replication"/>
    <property type="evidence" value="ECO:0007669"/>
    <property type="project" value="UniProtKB-UniRule"/>
</dbReference>
<dbReference type="GO" id="GO:0019083">
    <property type="term" value="P:viral transcription"/>
    <property type="evidence" value="ECO:0007669"/>
    <property type="project" value="UniProtKB-KW"/>
</dbReference>
<dbReference type="Gene3D" id="6.10.140.720">
    <property type="match status" value="1"/>
</dbReference>
<dbReference type="HAMAP" id="MF_04065">
    <property type="entry name" value="INFV_RDRP"/>
    <property type="match status" value="1"/>
</dbReference>
<dbReference type="InterPro" id="IPR007099">
    <property type="entry name" value="RNA-dir_pol_NSvirus"/>
</dbReference>
<dbReference type="InterPro" id="IPR001407">
    <property type="entry name" value="RNA_pol_PB1_influenza"/>
</dbReference>
<dbReference type="Pfam" id="PF00602">
    <property type="entry name" value="Flu_PB1"/>
    <property type="match status" value="1"/>
</dbReference>
<dbReference type="PIRSF" id="PIRSF000827">
    <property type="entry name" value="RdRPol_OMV"/>
    <property type="match status" value="1"/>
</dbReference>
<dbReference type="PROSITE" id="PS50525">
    <property type="entry name" value="RDRP_SSRNA_NEG_SEG"/>
    <property type="match status" value="1"/>
</dbReference>
<sequence>MDVNPTLLFLKVPAQNAISTTFPYTGDPPYSHGTGTGYTMDTVNRTHQYSEKGRWTTNTETGAPQLNPIDGPLPEDNEPSGYAQTDCVLEVMAFLEESHPGIFENSCIETMEVVQQTRVDKLTQGRQTYDWTLNRNQPAATALANTIEVFRSNGLTANESGRLIDFLKDVMESMNKEEMGITTHFQRKRRVRDNMTKKMITQRTMGKKKQRLNKRSYLIRALTLNTMTKDAERGKLKRRAIATPGMQIRGFVYFVETLARSICEKLEQSGLPVGGNEKKAKLANVVRKMMTNSQDTELSFTITGDNTKWNENQNPRMFLAMITYMTRNQPEWFRNVLSIAPIMFSNKMARLGKGYMFESKSMKLRTQIPAEMLASIDLKYFNDSTRKKIEKIRPLLIEGTASLSPGMMMGMFNMLSTVLGVSILNLGQKRYTKTTYWWDGLQSSDDFALIVNAPNHEGIQAGVDRFYRTCKLLGINMSKKKSYINRTGTFEFTSFFYRYGFVANFSMELPSFGVSGINESADMSIGVTVIKNNMINNDLGPATAQMALQLFIKDYRYTYRCHRGDTQIQTRRSFEIKKLWEQTRSKAGLLVSDGGPNLYNIRNLHIPEVCLKWELMDEDYQGRLCNPLNPFVSHKEIESMNNAVMMPAHGPAKNMEYDAVATTHSWIPKRNRSILNTSQRGVLGDEQMYQRCCNLFEKFFPSSSYRRPVGISSMVEAMVSRARIDARIDFESGRIKKEEFTEIMKICSTIEELRRQK</sequence>
<organismHost>
    <name type="scientific">Aves</name>
    <dbReference type="NCBI Taxonomy" id="8782"/>
</organismHost>
<organismHost>
    <name type="scientific">Cetacea</name>
    <name type="common">whales</name>
    <dbReference type="NCBI Taxonomy" id="9721"/>
</organismHost>
<organismHost>
    <name type="scientific">Homo sapiens</name>
    <name type="common">Human</name>
    <dbReference type="NCBI Taxonomy" id="9606"/>
</organismHost>
<organismHost>
    <name type="scientific">Phocidae</name>
    <name type="common">true seals</name>
    <dbReference type="NCBI Taxonomy" id="9709"/>
</organismHost>
<organismHost>
    <name type="scientific">Sus scrofa</name>
    <name type="common">Pig</name>
    <dbReference type="NCBI Taxonomy" id="9823"/>
</organismHost>
<protein>
    <recommendedName>
        <fullName evidence="1">RNA-directed RNA polymerase catalytic subunit</fullName>
        <ecNumber evidence="1">2.7.7.48</ecNumber>
    </recommendedName>
    <alternativeName>
        <fullName evidence="1">Polymerase basic protein 1</fullName>
        <shortName evidence="1">PB1</shortName>
    </alternativeName>
    <alternativeName>
        <fullName evidence="1">RNA-directed RNA polymerase subunit P1</fullName>
    </alternativeName>
</protein>
<proteinExistence type="inferred from homology"/>
<reference key="1">
    <citation type="submission" date="2000-01" db="EMBL/GenBank/DDBJ databases">
        <authorList>
            <person name="Seong B."/>
            <person name="Lee K."/>
        </authorList>
    </citation>
    <scope>NUCLEOTIDE SEQUENCE [GENOMIC RNA]</scope>
</reference>
<evidence type="ECO:0000255" key="1">
    <source>
        <dbReference type="HAMAP-Rule" id="MF_04065"/>
    </source>
</evidence>
<evidence type="ECO:0000256" key="2">
    <source>
        <dbReference type="SAM" id="MobiDB-lite"/>
    </source>
</evidence>
<feature type="chain" id="PRO_0000279620" description="RNA-directed RNA polymerase catalytic subunit">
    <location>
        <begin position="1"/>
        <end position="757"/>
    </location>
</feature>
<feature type="domain" description="RdRp catalytic" evidence="1">
    <location>
        <begin position="286"/>
        <end position="483"/>
    </location>
</feature>
<feature type="region of interest" description="Disordered" evidence="2">
    <location>
        <begin position="53"/>
        <end position="82"/>
    </location>
</feature>
<feature type="region of interest" description="Promoter-binding site" evidence="1">
    <location>
        <begin position="249"/>
        <end position="256"/>
    </location>
</feature>
<feature type="short sequence motif" description="Nuclear localization signal" evidence="1">
    <location>
        <begin position="187"/>
        <end position="195"/>
    </location>
</feature>
<feature type="short sequence motif" description="Nuclear localization signal" evidence="1">
    <location>
        <begin position="203"/>
        <end position="216"/>
    </location>
</feature>
<feature type="compositionally biased region" description="Polar residues" evidence="2">
    <location>
        <begin position="55"/>
        <end position="64"/>
    </location>
</feature>
<accession>Q9IQ46</accession>
<organism>
    <name type="scientific">Influenza A virus (strain A/X-31 H3N2)</name>
    <dbReference type="NCBI Taxonomy" id="132504"/>
    <lineage>
        <taxon>Viruses</taxon>
        <taxon>Riboviria</taxon>
        <taxon>Orthornavirae</taxon>
        <taxon>Negarnaviricota</taxon>
        <taxon>Polyploviricotina</taxon>
        <taxon>Insthoviricetes</taxon>
        <taxon>Articulavirales</taxon>
        <taxon>Orthomyxoviridae</taxon>
        <taxon>Alphainfluenzavirus</taxon>
        <taxon>Alphainfluenzavirus influenzae</taxon>
        <taxon>Influenza A virus</taxon>
    </lineage>
</organism>
<comment type="function">
    <text evidence="1">RNA-dependent RNA polymerase which is responsible for replication and transcription of virus RNA segments. The transcription of viral mRNAs occurs by a unique mechanism called cap-snatching. 5' methylated caps of cellular mRNAs are cleaved after 10-13 nucleotides by PA. In turn, these short capped RNAs are used as primers by PB1 for transcription of viral mRNAs. During virus replication, PB1 initiates RNA synthesis and copy vRNA into complementary RNA (cRNA) which in turn serves as a template for the production of more vRNAs.</text>
</comment>
<comment type="catalytic activity">
    <reaction evidence="1">
        <text>RNA(n) + a ribonucleoside 5'-triphosphate = RNA(n+1) + diphosphate</text>
        <dbReference type="Rhea" id="RHEA:21248"/>
        <dbReference type="Rhea" id="RHEA-COMP:14527"/>
        <dbReference type="Rhea" id="RHEA-COMP:17342"/>
        <dbReference type="ChEBI" id="CHEBI:33019"/>
        <dbReference type="ChEBI" id="CHEBI:61557"/>
        <dbReference type="ChEBI" id="CHEBI:140395"/>
        <dbReference type="EC" id="2.7.7.48"/>
    </reaction>
</comment>
<comment type="subunit">
    <text evidence="1">Influenza RNA polymerase is composed of three subunits: PB1, PB2 and PA. Interacts (via N-terminus) with PA (via C-terminus). Interacts (via C-terminus) with PB2 (via N-terminus); this interaction is essential for transcription initiation.</text>
</comment>
<comment type="subcellular location">
    <subcellularLocation>
        <location evidence="1">Host nucleus</location>
    </subcellularLocation>
    <subcellularLocation>
        <location evidence="1">Host cytoplasm</location>
    </subcellularLocation>
</comment>
<comment type="PTM">
    <text evidence="1">Phosphorylated by host PRKCA.</text>
</comment>
<comment type="similarity">
    <text evidence="1">Belongs to the influenza viruses polymerase PB1 family.</text>
</comment>